<gene>
    <name type="ORF">SELMODRAFT_448915</name>
</gene>
<reference key="1">
    <citation type="journal article" date="2011" name="Science">
        <title>The Selaginella genome identifies genetic changes associated with the evolution of vascular plants.</title>
        <authorList>
            <person name="Banks J.A."/>
            <person name="Nishiyama T."/>
            <person name="Hasebe M."/>
            <person name="Bowman J.L."/>
            <person name="Gribskov M."/>
            <person name="dePamphilis C."/>
            <person name="Albert V.A."/>
            <person name="Aono N."/>
            <person name="Aoyama T."/>
            <person name="Ambrose B.A."/>
            <person name="Ashton N.W."/>
            <person name="Axtell M.J."/>
            <person name="Barker E."/>
            <person name="Barker M.S."/>
            <person name="Bennetzen J.L."/>
            <person name="Bonawitz N.D."/>
            <person name="Chapple C."/>
            <person name="Cheng C."/>
            <person name="Correa L.G."/>
            <person name="Dacre M."/>
            <person name="DeBarry J."/>
            <person name="Dreyer I."/>
            <person name="Elias M."/>
            <person name="Engstrom E.M."/>
            <person name="Estelle M."/>
            <person name="Feng L."/>
            <person name="Finet C."/>
            <person name="Floyd S.K."/>
            <person name="Frommer W.B."/>
            <person name="Fujita T."/>
            <person name="Gramzow L."/>
            <person name="Gutensohn M."/>
            <person name="Harholt J."/>
            <person name="Hattori M."/>
            <person name="Heyl A."/>
            <person name="Hirai T."/>
            <person name="Hiwatashi Y."/>
            <person name="Ishikawa M."/>
            <person name="Iwata M."/>
            <person name="Karol K.G."/>
            <person name="Koehler B."/>
            <person name="Kolukisaoglu U."/>
            <person name="Kubo M."/>
            <person name="Kurata T."/>
            <person name="Lalonde S."/>
            <person name="Li K."/>
            <person name="Li Y."/>
            <person name="Litt A."/>
            <person name="Lyons E."/>
            <person name="Manning G."/>
            <person name="Maruyama T."/>
            <person name="Michael T.P."/>
            <person name="Mikami K."/>
            <person name="Miyazaki S."/>
            <person name="Morinaga S."/>
            <person name="Murata T."/>
            <person name="Mueller-Roeber B."/>
            <person name="Nelson D.R."/>
            <person name="Obara M."/>
            <person name="Oguri Y."/>
            <person name="Olmstead R.G."/>
            <person name="Onodera N."/>
            <person name="Petersen B.L."/>
            <person name="Pils B."/>
            <person name="Prigge M."/>
            <person name="Rensing S.A."/>
            <person name="Riano-Pachon D.M."/>
            <person name="Roberts A.W."/>
            <person name="Sato Y."/>
            <person name="Scheller H.V."/>
            <person name="Schulz B."/>
            <person name="Schulz C."/>
            <person name="Shakirov E.V."/>
            <person name="Shibagaki N."/>
            <person name="Shinohara N."/>
            <person name="Shippen D.E."/>
            <person name="Soerensen I."/>
            <person name="Sotooka R."/>
            <person name="Sugimoto N."/>
            <person name="Sugita M."/>
            <person name="Sumikawa N."/>
            <person name="Tanurdzic M."/>
            <person name="Theissen G."/>
            <person name="Ulvskov P."/>
            <person name="Wakazuki S."/>
            <person name="Weng J.K."/>
            <person name="Willats W.W."/>
            <person name="Wipf D."/>
            <person name="Wolf P.G."/>
            <person name="Yang L."/>
            <person name="Zimmer A.D."/>
            <person name="Zhu Q."/>
            <person name="Mitros T."/>
            <person name="Hellsten U."/>
            <person name="Loque D."/>
            <person name="Otillar R."/>
            <person name="Salamov A."/>
            <person name="Schmutz J."/>
            <person name="Shapiro H."/>
            <person name="Lindquist E."/>
            <person name="Lucas S."/>
            <person name="Rokhsar D."/>
            <person name="Grigoriev I.V."/>
        </authorList>
    </citation>
    <scope>NUCLEOTIDE SEQUENCE [LARGE SCALE GENOMIC DNA]</scope>
</reference>
<reference key="2">
    <citation type="submission" date="2008-03" db="EMBL/GenBank/DDBJ databases">
        <title>DOE Joint Genome Institute Selaginella moellendorffii EST project.</title>
        <authorList>
            <person name="Richardson P."/>
            <person name="Lucas S."/>
            <person name="Rokhsar D."/>
            <person name="Wang M."/>
            <person name="Lindquist E.A."/>
        </authorList>
    </citation>
    <scope>NUCLEOTIDE SEQUENCE [LARGE SCALE MRNA]</scope>
</reference>
<reference key="3">
    <citation type="journal article" date="2014" name="Plant Physiol.">
        <title>Functional and evolutionary analysis of the CASPARIAN STRIP MEMBRANE DOMAIN PROTEIN family.</title>
        <authorList>
            <person name="Roppolo D."/>
            <person name="Boeckmann B."/>
            <person name="Pfister A."/>
            <person name="Boutet E."/>
            <person name="Rubio M.C."/>
            <person name="Denervaud-Tendon V."/>
            <person name="Vermeer J.E."/>
            <person name="Gheyselinck J."/>
            <person name="Xenarios I."/>
            <person name="Geldner N."/>
        </authorList>
    </citation>
    <scope>GENE FAMILY</scope>
    <scope>NOMENCLATURE</scope>
</reference>
<name>CSPL7_SELML</name>
<feature type="chain" id="PRO_0000412054" description="CASP-like protein 2U9">
    <location>
        <begin position="1"/>
        <end position="208"/>
    </location>
</feature>
<feature type="topological domain" description="Cytoplasmic" evidence="2">
    <location>
        <begin position="1"/>
        <end position="27"/>
    </location>
</feature>
<feature type="transmembrane region" description="Helical" evidence="2">
    <location>
        <begin position="28"/>
        <end position="48"/>
    </location>
</feature>
<feature type="topological domain" description="Extracellular" evidence="2">
    <location>
        <begin position="49"/>
        <end position="87"/>
    </location>
</feature>
<feature type="transmembrane region" description="Helical" evidence="2">
    <location>
        <begin position="88"/>
        <end position="108"/>
    </location>
</feature>
<feature type="topological domain" description="Cytoplasmic" evidence="2">
    <location>
        <begin position="109"/>
        <end position="120"/>
    </location>
</feature>
<feature type="transmembrane region" description="Helical" evidence="2">
    <location>
        <begin position="121"/>
        <end position="141"/>
    </location>
</feature>
<feature type="topological domain" description="Extracellular" evidence="2">
    <location>
        <begin position="142"/>
        <end position="168"/>
    </location>
</feature>
<feature type="transmembrane region" description="Helical" evidence="2">
    <location>
        <begin position="169"/>
        <end position="189"/>
    </location>
</feature>
<feature type="topological domain" description="Cytoplasmic" evidence="2">
    <location>
        <begin position="190"/>
        <end position="208"/>
    </location>
</feature>
<feature type="sequence conflict" description="In Ref. 2; FE454924." evidence="3" ref="2">
    <original>Q</original>
    <variation>P</variation>
    <location>
        <position position="203"/>
    </location>
</feature>
<sequence>MGVADAPSPGNVPVLGDMKNRSAAEMKISVLALRALTLVLLVIALALMVSNKQTQSIPIKLPGMASTIFLKKTATFSQITGVQYYVGALSVAVAYMFFQMLAGLFTILTTGSIVGSKSRAWVTFILDQLIAYLMVSAATVVAEVGYIARRGETKVGWNQVCSDFKHYCFIYGFSLVNAFLATIAFLPVVAVSAFHLFRMYGAQSAQSK</sequence>
<comment type="subunit">
    <text evidence="1">Homodimer and heterodimers.</text>
</comment>
<comment type="subcellular location">
    <subcellularLocation>
        <location evidence="1">Cell membrane</location>
        <topology evidence="1">Multi-pass membrane protein</topology>
    </subcellularLocation>
</comment>
<comment type="similarity">
    <text evidence="3">Belongs to the Casparian strip membrane proteins (CASP) family.</text>
</comment>
<comment type="sequence caution" evidence="3">
    <conflict type="erroneous gene model prediction">
        <sequence resource="EMBL-CDS" id="EFJ06098"/>
    </conflict>
    <text>The predicted gene has been split into 2 genes.</text>
</comment>
<keyword id="KW-1003">Cell membrane</keyword>
<keyword id="KW-0472">Membrane</keyword>
<keyword id="KW-1185">Reference proteome</keyword>
<keyword id="KW-0812">Transmembrane</keyword>
<keyword id="KW-1133">Transmembrane helix</keyword>
<organism>
    <name type="scientific">Selaginella moellendorffii</name>
    <name type="common">Spikemoss</name>
    <dbReference type="NCBI Taxonomy" id="88036"/>
    <lineage>
        <taxon>Eukaryota</taxon>
        <taxon>Viridiplantae</taxon>
        <taxon>Streptophyta</taxon>
        <taxon>Embryophyta</taxon>
        <taxon>Tracheophyta</taxon>
        <taxon>Lycopodiopsida</taxon>
        <taxon>Selaginellales</taxon>
        <taxon>Selaginellaceae</taxon>
        <taxon>Selaginella</taxon>
    </lineage>
</organism>
<accession>P0DH63</accession>
<accession>D8TB55</accession>
<protein>
    <recommendedName>
        <fullName>CASP-like protein 2U9</fullName>
        <shortName>SmCASPL2U9</shortName>
    </recommendedName>
</protein>
<proteinExistence type="evidence at transcript level"/>
<evidence type="ECO:0000250" key="1"/>
<evidence type="ECO:0000255" key="2"/>
<evidence type="ECO:0000305" key="3"/>
<dbReference type="EMBL" id="GL377707">
    <property type="protein sequence ID" value="EFJ06098.1"/>
    <property type="status" value="ALT_SEQ"/>
    <property type="molecule type" value="Genomic_DNA"/>
</dbReference>
<dbReference type="EMBL" id="FE454924">
    <property type="status" value="NOT_ANNOTATED_CDS"/>
    <property type="molecule type" value="mRNA"/>
</dbReference>
<dbReference type="HOGENOM" id="CLU_555981_0_0_1"/>
<dbReference type="InParanoid" id="P0DH63"/>
<dbReference type="OrthoDB" id="689701at2759"/>
<dbReference type="Proteomes" id="UP000001514">
    <property type="component" value="Unassembled WGS sequence"/>
</dbReference>
<dbReference type="GO" id="GO:0005886">
    <property type="term" value="C:plasma membrane"/>
    <property type="evidence" value="ECO:0007669"/>
    <property type="project" value="UniProtKB-SubCell"/>
</dbReference>
<dbReference type="InterPro" id="IPR006459">
    <property type="entry name" value="CASP/CASPL"/>
</dbReference>
<dbReference type="InterPro" id="IPR006702">
    <property type="entry name" value="CASP_dom"/>
</dbReference>
<dbReference type="NCBIfam" id="TIGR01569">
    <property type="entry name" value="A_tha_TIGR01569"/>
    <property type="match status" value="1"/>
</dbReference>
<dbReference type="PANTHER" id="PTHR33573:SF30">
    <property type="entry name" value="CASP-LIKE PROTEIN 2C1-RELATED"/>
    <property type="match status" value="1"/>
</dbReference>
<dbReference type="PANTHER" id="PTHR33573">
    <property type="entry name" value="CASP-LIKE PROTEIN 4A4"/>
    <property type="match status" value="1"/>
</dbReference>
<dbReference type="Pfam" id="PF04535">
    <property type="entry name" value="CASP_dom"/>
    <property type="match status" value="1"/>
</dbReference>